<name>SECD_BORBU</name>
<gene>
    <name evidence="1" type="primary">secD</name>
    <name type="ordered locus">BB_0652</name>
</gene>
<accession>O51596</accession>
<sequence length="586" mass="65028">MKKGSKLILILLVTFFACLLIFPTLKWYFLMSVEDKKISSYSQEALRDYSKKKALNDLVKLKELYNKDPNSSIPASLSYLIPIAKNNYRSSMKIPPNIFTAKTLREGFLTDSDMGEVSLEIYRYYENIKKGKSRIIHLGLDLSGGMSVTISLDYSSVEKKLGRSLTFAEREDAIYRIMQILKDRVBRFGLTEPKIVREAGGNKIFLDIPGEKDESRVSTLLSGKGNLTFYVVDDESTSLLHRKILEAGSLFSIPEIQASMNLPDSKQIFPWYVKDSYGVDDESSVRYYVVDASPENSFDGAHIKDAGVSNDPRTGRDTVAFSLDVDGSEKFFKFTQKNVGKSLAVVMEGKIKSVAGIGYAITGGNVSIQGDSFDKKEAQDLALVFKTAAFPVDIKIDDLRIIGPTLGARTIDLGIKASALALCLVFLFICVYYGLSGVVAGFSLVIYNVFLILAILSAFNFTLTLTSIAGLILTMGMAVDINIVIYERIKEEIREGRRFENAFEAGFKKAFLSIMDANITTFIAVLFLTLLGTGVIQGFAWSLSVGIVASLFSSLIFSRFILEFIISVRKSKFISISWSSKYAKSN</sequence>
<keyword id="KW-0997">Cell inner membrane</keyword>
<keyword id="KW-1003">Cell membrane</keyword>
<keyword id="KW-0472">Membrane</keyword>
<keyword id="KW-0653">Protein transport</keyword>
<keyword id="KW-1185">Reference proteome</keyword>
<keyword id="KW-0811">Translocation</keyword>
<keyword id="KW-0812">Transmembrane</keyword>
<keyword id="KW-1133">Transmembrane helix</keyword>
<keyword id="KW-0813">Transport</keyword>
<evidence type="ECO:0000255" key="1">
    <source>
        <dbReference type="HAMAP-Rule" id="MF_01463"/>
    </source>
</evidence>
<reference key="1">
    <citation type="journal article" date="1997" name="Nature">
        <title>Genomic sequence of a Lyme disease spirochaete, Borrelia burgdorferi.</title>
        <authorList>
            <person name="Fraser C.M."/>
            <person name="Casjens S."/>
            <person name="Huang W.M."/>
            <person name="Sutton G.G."/>
            <person name="Clayton R.A."/>
            <person name="Lathigra R."/>
            <person name="White O."/>
            <person name="Ketchum K.A."/>
            <person name="Dodson R.J."/>
            <person name="Hickey E.K."/>
            <person name="Gwinn M.L."/>
            <person name="Dougherty B.A."/>
            <person name="Tomb J.-F."/>
            <person name="Fleischmann R.D."/>
            <person name="Richardson D.L."/>
            <person name="Peterson J.D."/>
            <person name="Kerlavage A.R."/>
            <person name="Quackenbush J."/>
            <person name="Salzberg S.L."/>
            <person name="Hanson M."/>
            <person name="van Vugt R."/>
            <person name="Palmer N."/>
            <person name="Adams M.D."/>
            <person name="Gocayne J.D."/>
            <person name="Weidman J.F."/>
            <person name="Utterback T.R."/>
            <person name="Watthey L."/>
            <person name="McDonald L.A."/>
            <person name="Artiach P."/>
            <person name="Bowman C."/>
            <person name="Garland S.A."/>
            <person name="Fujii C."/>
            <person name="Cotton M.D."/>
            <person name="Horst K."/>
            <person name="Roberts K.M."/>
            <person name="Hatch B."/>
            <person name="Smith H.O."/>
            <person name="Venter J.C."/>
        </authorList>
    </citation>
    <scope>NUCLEOTIDE SEQUENCE [LARGE SCALE GENOMIC DNA]</scope>
    <source>
        <strain>ATCC 35210 / DSM 4680 / CIP 102532 / B31</strain>
    </source>
</reference>
<feature type="chain" id="PRO_0000095957" description="Protein translocase subunit SecD">
    <location>
        <begin position="1"/>
        <end position="586"/>
    </location>
</feature>
<feature type="transmembrane region" description="Helical" evidence="1">
    <location>
        <begin position="7"/>
        <end position="27"/>
    </location>
</feature>
<feature type="transmembrane region" description="Helical" evidence="1">
    <location>
        <begin position="418"/>
        <end position="438"/>
    </location>
</feature>
<feature type="transmembrane region" description="Helical" evidence="1">
    <location>
        <begin position="439"/>
        <end position="459"/>
    </location>
</feature>
<feature type="transmembrane region" description="Helical" evidence="1">
    <location>
        <begin position="465"/>
        <end position="485"/>
    </location>
</feature>
<feature type="transmembrane region" description="Helical" evidence="1">
    <location>
        <begin position="521"/>
        <end position="541"/>
    </location>
</feature>
<feature type="transmembrane region" description="Helical" evidence="1">
    <location>
        <begin position="546"/>
        <end position="566"/>
    </location>
</feature>
<protein>
    <recommendedName>
        <fullName evidence="1">Protein translocase subunit SecD</fullName>
    </recommendedName>
</protein>
<comment type="function">
    <text evidence="1">Part of the Sec protein translocase complex. Interacts with the SecYEG preprotein conducting channel. SecDF uses the proton motive force (PMF) to complete protein translocation after the ATP-dependent function of SecA.</text>
</comment>
<comment type="subunit">
    <text evidence="1">Forms a complex with SecF. Part of the essential Sec protein translocation apparatus which comprises SecA, SecYEG and auxiliary proteins SecDF. Other proteins may also be involved.</text>
</comment>
<comment type="subcellular location">
    <subcellularLocation>
        <location evidence="1">Cell inner membrane</location>
        <topology evidence="1">Multi-pass membrane protein</topology>
    </subcellularLocation>
</comment>
<comment type="similarity">
    <text evidence="1">Belongs to the SecD/SecF family. SecD subfamily.</text>
</comment>
<organism>
    <name type="scientific">Borreliella burgdorferi (strain ATCC 35210 / DSM 4680 / CIP 102532 / B31)</name>
    <name type="common">Borrelia burgdorferi</name>
    <dbReference type="NCBI Taxonomy" id="224326"/>
    <lineage>
        <taxon>Bacteria</taxon>
        <taxon>Pseudomonadati</taxon>
        <taxon>Spirochaetota</taxon>
        <taxon>Spirochaetia</taxon>
        <taxon>Spirochaetales</taxon>
        <taxon>Borreliaceae</taxon>
        <taxon>Borreliella</taxon>
    </lineage>
</organism>
<proteinExistence type="inferred from homology"/>
<dbReference type="EMBL" id="AE000783">
    <property type="protein sequence ID" value="AAC66993.2"/>
    <property type="molecule type" value="Genomic_DNA"/>
</dbReference>
<dbReference type="RefSeq" id="NP_212786.1">
    <property type="nucleotide sequence ID" value="NC_001318.1"/>
</dbReference>
<dbReference type="RefSeq" id="WP_010889789.1">
    <property type="nucleotide sequence ID" value="NC_001318.1"/>
</dbReference>
<dbReference type="STRING" id="224326.BB_0652"/>
<dbReference type="PaxDb" id="224326-BB_0652"/>
<dbReference type="EnsemblBacteria" id="AAC66993">
    <property type="protein sequence ID" value="AAC66993"/>
    <property type="gene ID" value="BB_0652"/>
</dbReference>
<dbReference type="KEGG" id="bbu:BB_0652"/>
<dbReference type="PATRIC" id="fig|224326.49.peg.1043"/>
<dbReference type="HOGENOM" id="CLU_007894_4_3_12"/>
<dbReference type="OrthoDB" id="9805019at2"/>
<dbReference type="Proteomes" id="UP000001807">
    <property type="component" value="Chromosome"/>
</dbReference>
<dbReference type="GO" id="GO:0005886">
    <property type="term" value="C:plasma membrane"/>
    <property type="evidence" value="ECO:0007669"/>
    <property type="project" value="UniProtKB-SubCell"/>
</dbReference>
<dbReference type="GO" id="GO:0015450">
    <property type="term" value="F:protein-transporting ATPase activity"/>
    <property type="evidence" value="ECO:0007669"/>
    <property type="project" value="InterPro"/>
</dbReference>
<dbReference type="GO" id="GO:0065002">
    <property type="term" value="P:intracellular protein transmembrane transport"/>
    <property type="evidence" value="ECO:0007669"/>
    <property type="project" value="UniProtKB-UniRule"/>
</dbReference>
<dbReference type="GO" id="GO:0006605">
    <property type="term" value="P:protein targeting"/>
    <property type="evidence" value="ECO:0007669"/>
    <property type="project" value="UniProtKB-UniRule"/>
</dbReference>
<dbReference type="GO" id="GO:0043952">
    <property type="term" value="P:protein transport by the Sec complex"/>
    <property type="evidence" value="ECO:0007669"/>
    <property type="project" value="UniProtKB-UniRule"/>
</dbReference>
<dbReference type="Gene3D" id="3.30.1360.200">
    <property type="match status" value="1"/>
</dbReference>
<dbReference type="Gene3D" id="3.30.70.3220">
    <property type="match status" value="1"/>
</dbReference>
<dbReference type="Gene3D" id="1.20.1640.10">
    <property type="entry name" value="Multidrug efflux transporter AcrB transmembrane domain"/>
    <property type="match status" value="1"/>
</dbReference>
<dbReference type="HAMAP" id="MF_01463_B">
    <property type="entry name" value="SecD_B"/>
    <property type="match status" value="1"/>
</dbReference>
<dbReference type="InterPro" id="IPR001036">
    <property type="entry name" value="Acrflvin-R"/>
</dbReference>
<dbReference type="InterPro" id="IPR004869">
    <property type="entry name" value="MMPL_dom"/>
</dbReference>
<dbReference type="InterPro" id="IPR005791">
    <property type="entry name" value="SecD"/>
</dbReference>
<dbReference type="InterPro" id="IPR022813">
    <property type="entry name" value="SecD/SecF_arch_bac"/>
</dbReference>
<dbReference type="InterPro" id="IPR048631">
    <property type="entry name" value="SecD_1st"/>
</dbReference>
<dbReference type="InterPro" id="IPR055344">
    <property type="entry name" value="SecD_SecF_C_bact"/>
</dbReference>
<dbReference type="InterPro" id="IPR054384">
    <property type="entry name" value="SecDF_P1_head"/>
</dbReference>
<dbReference type="NCBIfam" id="TIGR00916">
    <property type="entry name" value="2A0604s01"/>
    <property type="match status" value="1"/>
</dbReference>
<dbReference type="NCBIfam" id="TIGR01129">
    <property type="entry name" value="secD"/>
    <property type="match status" value="1"/>
</dbReference>
<dbReference type="PANTHER" id="PTHR30081:SF1">
    <property type="entry name" value="PROTEIN TRANSLOCASE SUBUNIT SECD"/>
    <property type="match status" value="1"/>
</dbReference>
<dbReference type="PANTHER" id="PTHR30081">
    <property type="entry name" value="PROTEIN-EXPORT MEMBRANE PROTEIN SEC"/>
    <property type="match status" value="1"/>
</dbReference>
<dbReference type="Pfam" id="PF03176">
    <property type="entry name" value="MMPL"/>
    <property type="match status" value="1"/>
</dbReference>
<dbReference type="Pfam" id="PF21760">
    <property type="entry name" value="SecD_1st"/>
    <property type="match status" value="1"/>
</dbReference>
<dbReference type="Pfam" id="PF22599">
    <property type="entry name" value="SecDF_P1_head"/>
    <property type="match status" value="1"/>
</dbReference>
<dbReference type="PRINTS" id="PR00702">
    <property type="entry name" value="ACRIFLAVINRP"/>
</dbReference>
<dbReference type="SUPFAM" id="SSF82866">
    <property type="entry name" value="Multidrug efflux transporter AcrB transmembrane domain"/>
    <property type="match status" value="1"/>
</dbReference>